<reference key="1">
    <citation type="journal article" date="1991" name="Peptides">
        <title>Identification of RFamide neuropeptides in the medicinal leech.</title>
        <authorList>
            <person name="Evans B.D."/>
            <person name="Pohl J."/>
            <person name="Kartsonis M.A."/>
            <person name="Calabrese R.L."/>
        </authorList>
    </citation>
    <scope>PROTEIN SEQUENCE</scope>
    <scope>AMIDATION AT PHE-4</scope>
</reference>
<name>FAR4_HIRME</name>
<keyword id="KW-0027">Amidation</keyword>
<keyword id="KW-0903">Direct protein sequencing</keyword>
<keyword id="KW-0527">Neuropeptide</keyword>
<keyword id="KW-0964">Secreted</keyword>
<feature type="peptide" id="PRO_0000043680" description="FMRFamide-like neuropeptide YMRF-amide">
    <location>
        <begin position="1"/>
        <end position="4"/>
    </location>
</feature>
<feature type="modified residue" description="Phenylalanine amide" evidence="1">
    <location>
        <position position="4"/>
    </location>
</feature>
<proteinExistence type="evidence at protein level"/>
<comment type="subcellular location">
    <subcellularLocation>
        <location>Secreted</location>
    </subcellularLocation>
</comment>
<comment type="similarity">
    <text evidence="2">Belongs to the FARP (FMRFamide related peptide) family.</text>
</comment>
<protein>
    <recommendedName>
        <fullName>FMRFamide-like neuropeptide YMRF-amide</fullName>
    </recommendedName>
</protein>
<accession>P42563</accession>
<evidence type="ECO:0000269" key="1">
    <source>
    </source>
</evidence>
<evidence type="ECO:0000305" key="2"/>
<dbReference type="GO" id="GO:0005576">
    <property type="term" value="C:extracellular region"/>
    <property type="evidence" value="ECO:0007669"/>
    <property type="project" value="UniProtKB-SubCell"/>
</dbReference>
<dbReference type="GO" id="GO:0007218">
    <property type="term" value="P:neuropeptide signaling pathway"/>
    <property type="evidence" value="ECO:0007669"/>
    <property type="project" value="UniProtKB-KW"/>
</dbReference>
<organism>
    <name type="scientific">Hirudo medicinalis</name>
    <name type="common">Medicinal leech</name>
    <dbReference type="NCBI Taxonomy" id="6421"/>
    <lineage>
        <taxon>Eukaryota</taxon>
        <taxon>Metazoa</taxon>
        <taxon>Spiralia</taxon>
        <taxon>Lophotrochozoa</taxon>
        <taxon>Annelida</taxon>
        <taxon>Clitellata</taxon>
        <taxon>Hirudinea</taxon>
        <taxon>Hirudinida</taxon>
        <taxon>Hirudiniformes</taxon>
        <taxon>Hirudinidae</taxon>
        <taxon>Hirudo</taxon>
    </lineage>
</organism>
<sequence>YMRF</sequence>